<feature type="chain" id="PRO_0000150982" description="ORC1-type DNA replication protein 1">
    <location>
        <begin position="1"/>
        <end position="409"/>
    </location>
</feature>
<feature type="binding site" evidence="1">
    <location>
        <begin position="63"/>
        <end position="67"/>
    </location>
    <ligand>
        <name>ATP</name>
        <dbReference type="ChEBI" id="CHEBI:30616"/>
    </ligand>
</feature>
<feature type="binding site" evidence="1">
    <location>
        <position position="206"/>
    </location>
    <ligand>
        <name>ATP</name>
        <dbReference type="ChEBI" id="CHEBI:30616"/>
    </ligand>
</feature>
<feature type="binding site" evidence="1">
    <location>
        <position position="218"/>
    </location>
    <ligand>
        <name>ATP</name>
        <dbReference type="ChEBI" id="CHEBI:30616"/>
    </ligand>
</feature>
<comment type="function">
    <text evidence="1">Involved in regulation of DNA replication.</text>
</comment>
<comment type="similarity">
    <text evidence="1">Belongs to the CDC6/cdc18 family.</text>
</comment>
<protein>
    <recommendedName>
        <fullName evidence="1">ORC1-type DNA replication protein 1</fullName>
    </recommendedName>
</protein>
<gene>
    <name type="primary">cdc6-1</name>
    <name type="ordered locus">AF_0244</name>
</gene>
<evidence type="ECO:0000255" key="1">
    <source>
        <dbReference type="HAMAP-Rule" id="MF_01407"/>
    </source>
</evidence>
<proteinExistence type="inferred from homology"/>
<dbReference type="EMBL" id="AE000782">
    <property type="protein sequence ID" value="AAB90989.1"/>
    <property type="molecule type" value="Genomic_DNA"/>
</dbReference>
<dbReference type="PIR" id="D69280">
    <property type="entry name" value="D69280"/>
</dbReference>
<dbReference type="RefSeq" id="WP_010877755.1">
    <property type="nucleotide sequence ID" value="NC_000917.1"/>
</dbReference>
<dbReference type="SMR" id="O29995"/>
<dbReference type="STRING" id="224325.AF_0244"/>
<dbReference type="PaxDb" id="224325-AF_0244"/>
<dbReference type="EnsemblBacteria" id="AAB90989">
    <property type="protein sequence ID" value="AAB90989"/>
    <property type="gene ID" value="AF_0244"/>
</dbReference>
<dbReference type="KEGG" id="afu:AF_0244"/>
<dbReference type="eggNOG" id="arCOG00467">
    <property type="taxonomic scope" value="Archaea"/>
</dbReference>
<dbReference type="HOGENOM" id="CLU_025112_3_1_2"/>
<dbReference type="OrthoDB" id="195574at2157"/>
<dbReference type="PhylomeDB" id="O29995"/>
<dbReference type="Proteomes" id="UP000002199">
    <property type="component" value="Chromosome"/>
</dbReference>
<dbReference type="GO" id="GO:0005524">
    <property type="term" value="F:ATP binding"/>
    <property type="evidence" value="ECO:0007669"/>
    <property type="project" value="UniProtKB-UniRule"/>
</dbReference>
<dbReference type="GO" id="GO:0016887">
    <property type="term" value="F:ATP hydrolysis activity"/>
    <property type="evidence" value="ECO:0007669"/>
    <property type="project" value="InterPro"/>
</dbReference>
<dbReference type="GO" id="GO:0006260">
    <property type="term" value="P:DNA replication"/>
    <property type="evidence" value="ECO:0007669"/>
    <property type="project" value="UniProtKB-UniRule"/>
</dbReference>
<dbReference type="CDD" id="cd00009">
    <property type="entry name" value="AAA"/>
    <property type="match status" value="1"/>
</dbReference>
<dbReference type="CDD" id="cd08768">
    <property type="entry name" value="Cdc6_C"/>
    <property type="match status" value="1"/>
</dbReference>
<dbReference type="CDD" id="cd18139">
    <property type="entry name" value="HLD_clamp_RarA"/>
    <property type="match status" value="1"/>
</dbReference>
<dbReference type="FunFam" id="1.10.8.60:FF:000073">
    <property type="entry name" value="ORC1-type DNA replication protein"/>
    <property type="match status" value="1"/>
</dbReference>
<dbReference type="FunFam" id="3.40.50.300:FF:000930">
    <property type="entry name" value="ORC1-type DNA replication protein"/>
    <property type="match status" value="1"/>
</dbReference>
<dbReference type="Gene3D" id="1.10.8.60">
    <property type="match status" value="1"/>
</dbReference>
<dbReference type="Gene3D" id="3.40.50.300">
    <property type="entry name" value="P-loop containing nucleotide triphosphate hydrolases"/>
    <property type="match status" value="1"/>
</dbReference>
<dbReference type="Gene3D" id="1.10.10.10">
    <property type="entry name" value="Winged helix-like DNA-binding domain superfamily/Winged helix DNA-binding domain"/>
    <property type="match status" value="1"/>
</dbReference>
<dbReference type="HAMAP" id="MF_01407">
    <property type="entry name" value="ORC1_type_DNA_replic_protein"/>
    <property type="match status" value="1"/>
</dbReference>
<dbReference type="InterPro" id="IPR003593">
    <property type="entry name" value="AAA+_ATPase"/>
</dbReference>
<dbReference type="InterPro" id="IPR041664">
    <property type="entry name" value="AAA_16"/>
</dbReference>
<dbReference type="InterPro" id="IPR015163">
    <property type="entry name" value="Cdc6_C"/>
</dbReference>
<dbReference type="InterPro" id="IPR055237">
    <property type="entry name" value="Cdc6_lid"/>
</dbReference>
<dbReference type="InterPro" id="IPR050311">
    <property type="entry name" value="ORC1/CDC6"/>
</dbReference>
<dbReference type="InterPro" id="IPR014277">
    <property type="entry name" value="Orc1/Cdc6_arc"/>
</dbReference>
<dbReference type="InterPro" id="IPR027417">
    <property type="entry name" value="P-loop_NTPase"/>
</dbReference>
<dbReference type="InterPro" id="IPR036388">
    <property type="entry name" value="WH-like_DNA-bd_sf"/>
</dbReference>
<dbReference type="InterPro" id="IPR036390">
    <property type="entry name" value="WH_DNA-bd_sf"/>
</dbReference>
<dbReference type="NCBIfam" id="TIGR02928">
    <property type="entry name" value="orc1/cdc6 family replication initiation protein"/>
    <property type="match status" value="1"/>
</dbReference>
<dbReference type="NCBIfam" id="NF001625">
    <property type="entry name" value="PRK00411.1-3"/>
    <property type="match status" value="1"/>
</dbReference>
<dbReference type="PANTHER" id="PTHR10763">
    <property type="entry name" value="CELL DIVISION CONTROL PROTEIN 6-RELATED"/>
    <property type="match status" value="1"/>
</dbReference>
<dbReference type="PANTHER" id="PTHR10763:SF22">
    <property type="entry name" value="ORC1-TYPE DNA REPLICATION PROTEIN"/>
    <property type="match status" value="1"/>
</dbReference>
<dbReference type="Pfam" id="PF13191">
    <property type="entry name" value="AAA_16"/>
    <property type="match status" value="1"/>
</dbReference>
<dbReference type="Pfam" id="PF09079">
    <property type="entry name" value="Cdc6_C"/>
    <property type="match status" value="1"/>
</dbReference>
<dbReference type="Pfam" id="PF22703">
    <property type="entry name" value="Cdc6_lid"/>
    <property type="match status" value="1"/>
</dbReference>
<dbReference type="SMART" id="SM00382">
    <property type="entry name" value="AAA"/>
    <property type="match status" value="1"/>
</dbReference>
<dbReference type="SMART" id="SM01074">
    <property type="entry name" value="Cdc6_C"/>
    <property type="match status" value="1"/>
</dbReference>
<dbReference type="SUPFAM" id="SSF52540">
    <property type="entry name" value="P-loop containing nucleoside triphosphate hydrolases"/>
    <property type="match status" value="1"/>
</dbReference>
<dbReference type="SUPFAM" id="SSF46785">
    <property type="entry name" value="Winged helix' DNA-binding domain"/>
    <property type="match status" value="1"/>
</dbReference>
<name>CDC61_ARCFU</name>
<keyword id="KW-0067">ATP-binding</keyword>
<keyword id="KW-0235">DNA replication</keyword>
<keyword id="KW-0547">Nucleotide-binding</keyword>
<keyword id="KW-1185">Reference proteome</keyword>
<accession>O29995</accession>
<reference key="1">
    <citation type="journal article" date="1997" name="Nature">
        <title>The complete genome sequence of the hyperthermophilic, sulphate-reducing archaeon Archaeoglobus fulgidus.</title>
        <authorList>
            <person name="Klenk H.-P."/>
            <person name="Clayton R.A."/>
            <person name="Tomb J.-F."/>
            <person name="White O."/>
            <person name="Nelson K.E."/>
            <person name="Ketchum K.A."/>
            <person name="Dodson R.J."/>
            <person name="Gwinn M.L."/>
            <person name="Hickey E.K."/>
            <person name="Peterson J.D."/>
            <person name="Richardson D.L."/>
            <person name="Kerlavage A.R."/>
            <person name="Graham D.E."/>
            <person name="Kyrpides N.C."/>
            <person name="Fleischmann R.D."/>
            <person name="Quackenbush J."/>
            <person name="Lee N.H."/>
            <person name="Sutton G.G."/>
            <person name="Gill S.R."/>
            <person name="Kirkness E.F."/>
            <person name="Dougherty B.A."/>
            <person name="McKenney K."/>
            <person name="Adams M.D."/>
            <person name="Loftus B.J."/>
            <person name="Peterson S.N."/>
            <person name="Reich C.I."/>
            <person name="McNeil L.K."/>
            <person name="Badger J.H."/>
            <person name="Glodek A."/>
            <person name="Zhou L."/>
            <person name="Overbeek R."/>
            <person name="Gocayne J.D."/>
            <person name="Weidman J.F."/>
            <person name="McDonald L.A."/>
            <person name="Utterback T.R."/>
            <person name="Cotton M.D."/>
            <person name="Spriggs T."/>
            <person name="Artiach P."/>
            <person name="Kaine B.P."/>
            <person name="Sykes S.M."/>
            <person name="Sadow P.W."/>
            <person name="D'Andrea K.P."/>
            <person name="Bowman C."/>
            <person name="Fujii C."/>
            <person name="Garland S.A."/>
            <person name="Mason T.M."/>
            <person name="Olsen G.J."/>
            <person name="Fraser C.M."/>
            <person name="Smith H.O."/>
            <person name="Woese C.R."/>
            <person name="Venter J.C."/>
        </authorList>
    </citation>
    <scope>NUCLEOTIDE SEQUENCE [LARGE SCALE GENOMIC DNA]</scope>
    <source>
        <strain>ATCC 49558 / DSM 4304 / JCM 9628 / NBRC 100126 / VC-16</strain>
    </source>
</reference>
<sequence>MNIFDNILSSATIFKNRDVLRHSYTPEKLPHREEQINQLALLLSPMLRGGTPSNIFIYGKTGTGKTATVLFVARQLEEASRKAKLNVAVHYINCEIVDTAYRVLASLARKFGSNVPMTGWPTDQVYEEVKKALERRGTRVVVILDEIDKLVKKAEEALYGLTRINSELENSSICIVGISNNLKFKEYLDARILSSLSEEEIVFPPYNAEQLEDILQQRAKLAFEDGVLEDGVIQLCAAIAAQEHGDARKALDLLRVSAEIAERERDSMVRVEHVKKAVRKIETDYMIETVRTLPVHSKILLYSMSLISENSPKFTTGEVYCVYKKLCGKVGVDPLTQRRISDLISELDMLGILNSVVISKGRYGRTREMKLEADEKVLRKALEEDYRLQNLRKFEGELKKLANLNLFQF</sequence>
<organism>
    <name type="scientific">Archaeoglobus fulgidus (strain ATCC 49558 / DSM 4304 / JCM 9628 / NBRC 100126 / VC-16)</name>
    <dbReference type="NCBI Taxonomy" id="224325"/>
    <lineage>
        <taxon>Archaea</taxon>
        <taxon>Methanobacteriati</taxon>
        <taxon>Methanobacteriota</taxon>
        <taxon>Archaeoglobi</taxon>
        <taxon>Archaeoglobales</taxon>
        <taxon>Archaeoglobaceae</taxon>
        <taxon>Archaeoglobus</taxon>
    </lineage>
</organism>